<reference key="1">
    <citation type="submission" date="2008-06" db="EMBL/GenBank/DDBJ databases">
        <title>Complete sequence of Stenotrophomonas maltophilia R551-3.</title>
        <authorList>
            <consortium name="US DOE Joint Genome Institute"/>
            <person name="Lucas S."/>
            <person name="Copeland A."/>
            <person name="Lapidus A."/>
            <person name="Glavina del Rio T."/>
            <person name="Dalin E."/>
            <person name="Tice H."/>
            <person name="Pitluck S."/>
            <person name="Chain P."/>
            <person name="Malfatti S."/>
            <person name="Shin M."/>
            <person name="Vergez L."/>
            <person name="Lang D."/>
            <person name="Schmutz J."/>
            <person name="Larimer F."/>
            <person name="Land M."/>
            <person name="Hauser L."/>
            <person name="Kyrpides N."/>
            <person name="Mikhailova N."/>
            <person name="Taghavi S."/>
            <person name="Monchy S."/>
            <person name="Newman L."/>
            <person name="Vangronsveld J."/>
            <person name="van der Lelie D."/>
            <person name="Richardson P."/>
        </authorList>
    </citation>
    <scope>NUCLEOTIDE SEQUENCE [LARGE SCALE GENOMIC DNA]</scope>
    <source>
        <strain>R551-3</strain>
    </source>
</reference>
<name>TRPD_STRM5</name>
<evidence type="ECO:0000255" key="1">
    <source>
        <dbReference type="HAMAP-Rule" id="MF_00211"/>
    </source>
</evidence>
<keyword id="KW-0028">Amino-acid biosynthesis</keyword>
<keyword id="KW-0057">Aromatic amino acid biosynthesis</keyword>
<keyword id="KW-0328">Glycosyltransferase</keyword>
<keyword id="KW-0460">Magnesium</keyword>
<keyword id="KW-0479">Metal-binding</keyword>
<keyword id="KW-0808">Transferase</keyword>
<keyword id="KW-0822">Tryptophan biosynthesis</keyword>
<dbReference type="EC" id="2.4.2.18" evidence="1"/>
<dbReference type="EMBL" id="CP001111">
    <property type="protein sequence ID" value="ACF53418.1"/>
    <property type="molecule type" value="Genomic_DNA"/>
</dbReference>
<dbReference type="RefSeq" id="WP_012512313.1">
    <property type="nucleotide sequence ID" value="NC_011071.1"/>
</dbReference>
<dbReference type="SMR" id="B4SLE9"/>
<dbReference type="STRING" id="391008.Smal_3719"/>
<dbReference type="KEGG" id="smt:Smal_3719"/>
<dbReference type="eggNOG" id="COG0547">
    <property type="taxonomic scope" value="Bacteria"/>
</dbReference>
<dbReference type="HOGENOM" id="CLU_034315_2_1_6"/>
<dbReference type="OrthoDB" id="9806430at2"/>
<dbReference type="UniPathway" id="UPA00035">
    <property type="reaction ID" value="UER00041"/>
</dbReference>
<dbReference type="Proteomes" id="UP000001867">
    <property type="component" value="Chromosome"/>
</dbReference>
<dbReference type="GO" id="GO:0005829">
    <property type="term" value="C:cytosol"/>
    <property type="evidence" value="ECO:0007669"/>
    <property type="project" value="TreeGrafter"/>
</dbReference>
<dbReference type="GO" id="GO:0004048">
    <property type="term" value="F:anthranilate phosphoribosyltransferase activity"/>
    <property type="evidence" value="ECO:0007669"/>
    <property type="project" value="UniProtKB-UniRule"/>
</dbReference>
<dbReference type="GO" id="GO:0000287">
    <property type="term" value="F:magnesium ion binding"/>
    <property type="evidence" value="ECO:0007669"/>
    <property type="project" value="UniProtKB-UniRule"/>
</dbReference>
<dbReference type="GO" id="GO:0000162">
    <property type="term" value="P:L-tryptophan biosynthetic process"/>
    <property type="evidence" value="ECO:0007669"/>
    <property type="project" value="UniProtKB-UniRule"/>
</dbReference>
<dbReference type="FunFam" id="1.20.970.10:FF:000006">
    <property type="entry name" value="Anthranilate phosphoribosyltransferase"/>
    <property type="match status" value="1"/>
</dbReference>
<dbReference type="FunFam" id="3.40.1030.10:FF:000002">
    <property type="entry name" value="Anthranilate phosphoribosyltransferase"/>
    <property type="match status" value="1"/>
</dbReference>
<dbReference type="Gene3D" id="3.40.1030.10">
    <property type="entry name" value="Nucleoside phosphorylase/phosphoribosyltransferase catalytic domain"/>
    <property type="match status" value="1"/>
</dbReference>
<dbReference type="Gene3D" id="1.20.970.10">
    <property type="entry name" value="Transferase, Pyrimidine Nucleoside Phosphorylase, Chain C"/>
    <property type="match status" value="1"/>
</dbReference>
<dbReference type="HAMAP" id="MF_00211">
    <property type="entry name" value="TrpD"/>
    <property type="match status" value="1"/>
</dbReference>
<dbReference type="InterPro" id="IPR005940">
    <property type="entry name" value="Anthranilate_Pribosyl_Tfrase"/>
</dbReference>
<dbReference type="InterPro" id="IPR000312">
    <property type="entry name" value="Glycosyl_Trfase_fam3"/>
</dbReference>
<dbReference type="InterPro" id="IPR017459">
    <property type="entry name" value="Glycosyl_Trfase_fam3_N_dom"/>
</dbReference>
<dbReference type="InterPro" id="IPR036320">
    <property type="entry name" value="Glycosyl_Trfase_fam3_N_dom_sf"/>
</dbReference>
<dbReference type="InterPro" id="IPR035902">
    <property type="entry name" value="Nuc_phospho_transferase"/>
</dbReference>
<dbReference type="NCBIfam" id="TIGR01245">
    <property type="entry name" value="trpD"/>
    <property type="match status" value="1"/>
</dbReference>
<dbReference type="PANTHER" id="PTHR43285">
    <property type="entry name" value="ANTHRANILATE PHOSPHORIBOSYLTRANSFERASE"/>
    <property type="match status" value="1"/>
</dbReference>
<dbReference type="PANTHER" id="PTHR43285:SF2">
    <property type="entry name" value="ANTHRANILATE PHOSPHORIBOSYLTRANSFERASE"/>
    <property type="match status" value="1"/>
</dbReference>
<dbReference type="Pfam" id="PF02885">
    <property type="entry name" value="Glycos_trans_3N"/>
    <property type="match status" value="1"/>
</dbReference>
<dbReference type="Pfam" id="PF00591">
    <property type="entry name" value="Glycos_transf_3"/>
    <property type="match status" value="1"/>
</dbReference>
<dbReference type="SUPFAM" id="SSF52418">
    <property type="entry name" value="Nucleoside phosphorylase/phosphoribosyltransferase catalytic domain"/>
    <property type="match status" value="1"/>
</dbReference>
<dbReference type="SUPFAM" id="SSF47648">
    <property type="entry name" value="Nucleoside phosphorylase/phosphoribosyltransferase N-terminal domain"/>
    <property type="match status" value="1"/>
</dbReference>
<protein>
    <recommendedName>
        <fullName evidence="1">Anthranilate phosphoribosyltransferase</fullName>
        <ecNumber evidence="1">2.4.2.18</ecNumber>
    </recommendedName>
</protein>
<sequence>MSFSPQEALQRTIEHREIFFDEMVDLMRQIMRGDVSPMMTAAILTGLRVKKETIDEIAAAATVMREFALAVPVADSTHLVDIVGTGGDGSHTFNISTCAMFVAAAAGARVAKHGNRSVSSKSGSADAVEALGAAIELQPAQVAAAIEQTGIGFMFAPIHHPSMKVVAPVRREMGVRTIFNILGPLTNPASAPSVLMGVFHPDLVGIQARVLRELGTERAMVVWGRDNMDEISLGAGTLVGELRDGKVREYEIHPEDFGIAMSASRNLRVDGPEQSIAMLRAVLDNTPGPALDIVALNAGAALYVAGVASDIGDGLARARAAIANGSARQRLQQYVDTTRTLVA</sequence>
<comment type="function">
    <text evidence="1">Catalyzes the transfer of the phosphoribosyl group of 5-phosphorylribose-1-pyrophosphate (PRPP) to anthranilate to yield N-(5'-phosphoribosyl)-anthranilate (PRA).</text>
</comment>
<comment type="catalytic activity">
    <reaction evidence="1">
        <text>N-(5-phospho-beta-D-ribosyl)anthranilate + diphosphate = 5-phospho-alpha-D-ribose 1-diphosphate + anthranilate</text>
        <dbReference type="Rhea" id="RHEA:11768"/>
        <dbReference type="ChEBI" id="CHEBI:16567"/>
        <dbReference type="ChEBI" id="CHEBI:18277"/>
        <dbReference type="ChEBI" id="CHEBI:33019"/>
        <dbReference type="ChEBI" id="CHEBI:58017"/>
        <dbReference type="EC" id="2.4.2.18"/>
    </reaction>
</comment>
<comment type="cofactor">
    <cofactor evidence="1">
        <name>Mg(2+)</name>
        <dbReference type="ChEBI" id="CHEBI:18420"/>
    </cofactor>
    <text evidence="1">Binds 2 magnesium ions per monomer.</text>
</comment>
<comment type="pathway">
    <text evidence="1">Amino-acid biosynthesis; L-tryptophan biosynthesis; L-tryptophan from chorismate: step 2/5.</text>
</comment>
<comment type="subunit">
    <text evidence="1">Homodimer.</text>
</comment>
<comment type="similarity">
    <text evidence="1">Belongs to the anthranilate phosphoribosyltransferase family.</text>
</comment>
<feature type="chain" id="PRO_1000099847" description="Anthranilate phosphoribosyltransferase">
    <location>
        <begin position="1"/>
        <end position="343"/>
    </location>
</feature>
<feature type="binding site" evidence="1">
    <location>
        <position position="84"/>
    </location>
    <ligand>
        <name>5-phospho-alpha-D-ribose 1-diphosphate</name>
        <dbReference type="ChEBI" id="CHEBI:58017"/>
    </ligand>
</feature>
<feature type="binding site" evidence="1">
    <location>
        <position position="84"/>
    </location>
    <ligand>
        <name>anthranilate</name>
        <dbReference type="ChEBI" id="CHEBI:16567"/>
        <label>1</label>
    </ligand>
</feature>
<feature type="binding site" evidence="1">
    <location>
        <begin position="87"/>
        <end position="88"/>
    </location>
    <ligand>
        <name>5-phospho-alpha-D-ribose 1-diphosphate</name>
        <dbReference type="ChEBI" id="CHEBI:58017"/>
    </ligand>
</feature>
<feature type="binding site" evidence="1">
    <location>
        <position position="92"/>
    </location>
    <ligand>
        <name>5-phospho-alpha-D-ribose 1-diphosphate</name>
        <dbReference type="ChEBI" id="CHEBI:58017"/>
    </ligand>
</feature>
<feature type="binding site" evidence="1">
    <location>
        <begin position="94"/>
        <end position="97"/>
    </location>
    <ligand>
        <name>5-phospho-alpha-D-ribose 1-diphosphate</name>
        <dbReference type="ChEBI" id="CHEBI:58017"/>
    </ligand>
</feature>
<feature type="binding site" evidence="1">
    <location>
        <position position="96"/>
    </location>
    <ligand>
        <name>Mg(2+)</name>
        <dbReference type="ChEBI" id="CHEBI:18420"/>
        <label>1</label>
    </ligand>
</feature>
<feature type="binding site" evidence="1">
    <location>
        <begin position="112"/>
        <end position="120"/>
    </location>
    <ligand>
        <name>5-phospho-alpha-D-ribose 1-diphosphate</name>
        <dbReference type="ChEBI" id="CHEBI:58017"/>
    </ligand>
</feature>
<feature type="binding site" evidence="1">
    <location>
        <position position="115"/>
    </location>
    <ligand>
        <name>anthranilate</name>
        <dbReference type="ChEBI" id="CHEBI:16567"/>
        <label>1</label>
    </ligand>
</feature>
<feature type="binding site" evidence="1">
    <location>
        <position position="124"/>
    </location>
    <ligand>
        <name>5-phospho-alpha-D-ribose 1-diphosphate</name>
        <dbReference type="ChEBI" id="CHEBI:58017"/>
    </ligand>
</feature>
<feature type="binding site" evidence="1">
    <location>
        <position position="170"/>
    </location>
    <ligand>
        <name>anthranilate</name>
        <dbReference type="ChEBI" id="CHEBI:16567"/>
        <label>2</label>
    </ligand>
</feature>
<feature type="binding site" evidence="1">
    <location>
        <position position="229"/>
    </location>
    <ligand>
        <name>Mg(2+)</name>
        <dbReference type="ChEBI" id="CHEBI:18420"/>
        <label>2</label>
    </ligand>
</feature>
<feature type="binding site" evidence="1">
    <location>
        <position position="230"/>
    </location>
    <ligand>
        <name>Mg(2+)</name>
        <dbReference type="ChEBI" id="CHEBI:18420"/>
        <label>1</label>
    </ligand>
</feature>
<feature type="binding site" evidence="1">
    <location>
        <position position="230"/>
    </location>
    <ligand>
        <name>Mg(2+)</name>
        <dbReference type="ChEBI" id="CHEBI:18420"/>
        <label>2</label>
    </ligand>
</feature>
<proteinExistence type="inferred from homology"/>
<gene>
    <name evidence="1" type="primary">trpD</name>
    <name type="ordered locus">Smal_3719</name>
</gene>
<accession>B4SLE9</accession>
<organism>
    <name type="scientific">Stenotrophomonas maltophilia (strain R551-3)</name>
    <dbReference type="NCBI Taxonomy" id="391008"/>
    <lineage>
        <taxon>Bacteria</taxon>
        <taxon>Pseudomonadati</taxon>
        <taxon>Pseudomonadota</taxon>
        <taxon>Gammaproteobacteria</taxon>
        <taxon>Lysobacterales</taxon>
        <taxon>Lysobacteraceae</taxon>
        <taxon>Stenotrophomonas</taxon>
        <taxon>Stenotrophomonas maltophilia group</taxon>
    </lineage>
</organism>